<evidence type="ECO:0000305" key="1"/>
<name>MATRX_PI2HT</name>
<feature type="chain" id="PRO_0000142764" description="Matrix protein">
    <location>
        <begin position="1"/>
        <end position="377"/>
    </location>
</feature>
<sequence length="377" mass="42312">MPIISLPADPTSPSQSLTPFPIQLDTKDGKAGKLLKQIRIRYLNEPNSRHTPITFINTYGFVYARDTSGGIHSEISSDLAAGSITACMMKLGPGPNIQNANLVLRSLNEFYVKVKKTSSQREEAVFELVNIPTLLREHALCKRKMLVCSAEKFLKNPSKLQAGFEYVYIPTFVSITYSPRNLNYQVARPILKFRSRFVYSIHLELILRLLCKSDSPLMKSYNADRTGRGCLASVWIHVCNILKNKSIKQQGRESYFIAKCMSMQLQVSIADLWGPTIIIKSLGHIPKTALPFFSKDGIACHPLQDVSPNLAKSLWSVGCEIESAKLILQESDLNELMGHQDLITDKIAIRSGQRTFERSKFSPFKKYASIPNLEAIN</sequence>
<keyword id="KW-1185">Reference proteome</keyword>
<keyword id="KW-0261">Viral envelope protein</keyword>
<keyword id="KW-0468">Viral matrix protein</keyword>
<keyword id="KW-0946">Virion</keyword>
<proteinExistence type="evidence at transcript level"/>
<reference key="1">
    <citation type="journal article" date="1990" name="Virology">
        <title>Complete nucleotide sequence of the matrix gene of human parainfluenza type 2 virus and expression of the M protein in bacteria.</title>
        <authorList>
            <person name="Kawano M."/>
            <person name="Bando H."/>
            <person name="Ohgimoto S."/>
            <person name="Okamoto K."/>
            <person name="Kondo K."/>
            <person name="Tsurudome M."/>
            <person name="Nishio M."/>
            <person name="Ito Y."/>
        </authorList>
    </citation>
    <scope>NUCLEOTIDE SEQUENCE [MRNA]</scope>
</reference>
<dbReference type="EMBL" id="M62734">
    <property type="protein sequence ID" value="AAA46862.1"/>
    <property type="molecule type" value="mRNA"/>
</dbReference>
<dbReference type="EMBL" id="X57559">
    <property type="protein sequence ID" value="CAA40785.1"/>
    <property type="molecule type" value="Genomic_DNA"/>
</dbReference>
<dbReference type="PIR" id="A36421">
    <property type="entry name" value="MFNZP2"/>
</dbReference>
<dbReference type="SMR" id="P24266"/>
<dbReference type="KEGG" id="vg:935187"/>
<dbReference type="Proteomes" id="UP000000472">
    <property type="component" value="Segment"/>
</dbReference>
<dbReference type="GO" id="GO:0019031">
    <property type="term" value="C:viral envelope"/>
    <property type="evidence" value="ECO:0007669"/>
    <property type="project" value="UniProtKB-KW"/>
</dbReference>
<dbReference type="GO" id="GO:0039660">
    <property type="term" value="F:structural constituent of virion"/>
    <property type="evidence" value="ECO:0007669"/>
    <property type="project" value="UniProtKB-KW"/>
</dbReference>
<dbReference type="GO" id="GO:0019068">
    <property type="term" value="P:virion assembly"/>
    <property type="evidence" value="ECO:0007669"/>
    <property type="project" value="InterPro"/>
</dbReference>
<dbReference type="Gene3D" id="2.70.20.60">
    <property type="entry name" value="Viral matrix protein, C-terminal domain"/>
    <property type="match status" value="1"/>
</dbReference>
<dbReference type="Gene3D" id="2.70.20.50">
    <property type="entry name" value="Viral matrix protein, N-terminal domain"/>
    <property type="match status" value="1"/>
</dbReference>
<dbReference type="InterPro" id="IPR042539">
    <property type="entry name" value="Matrix_C"/>
</dbReference>
<dbReference type="InterPro" id="IPR042540">
    <property type="entry name" value="Matrix_N"/>
</dbReference>
<dbReference type="InterPro" id="IPR055413">
    <property type="entry name" value="Matrix_Paramyxo_C"/>
</dbReference>
<dbReference type="InterPro" id="IPR000982">
    <property type="entry name" value="Matrix_Paramyxo_N"/>
</dbReference>
<dbReference type="Pfam" id="PF23765">
    <property type="entry name" value="Matrix_Paramyxo_C"/>
    <property type="match status" value="1"/>
</dbReference>
<dbReference type="Pfam" id="PF00661">
    <property type="entry name" value="Matrix_Paramyxo_N"/>
    <property type="match status" value="1"/>
</dbReference>
<protein>
    <recommendedName>
        <fullName>Matrix protein</fullName>
    </recommendedName>
    <alternativeName>
        <fullName>Membrane protein</fullName>
    </alternativeName>
</protein>
<organismHost>
    <name type="scientific">Homo sapiens</name>
    <name type="common">Human</name>
    <dbReference type="NCBI Taxonomy" id="9606"/>
</organismHost>
<organism>
    <name type="scientific">Human parainfluenza 2 virus (strain Toshiba)</name>
    <name type="common">HPIV-2</name>
    <dbReference type="NCBI Taxonomy" id="11214"/>
    <lineage>
        <taxon>Viruses</taxon>
        <taxon>Riboviria</taxon>
        <taxon>Orthornavirae</taxon>
        <taxon>Negarnaviricota</taxon>
        <taxon>Haploviricotina</taxon>
        <taxon>Monjiviricetes</taxon>
        <taxon>Mononegavirales</taxon>
        <taxon>Paramyxoviridae</taxon>
        <taxon>Rubulavirinae</taxon>
        <taxon>Orthorubulavirus</taxon>
        <taxon>Orthorubulavirus laryngotracheitidis</taxon>
        <taxon>Human parainfluenza 2 virus</taxon>
    </lineage>
</organism>
<accession>P24266</accession>
<comment type="function">
    <text>The M protein has a crucial role in virus assembly and interacts with the RNP complex as well as with the viral membrane.</text>
</comment>
<comment type="subcellular location">
    <subcellularLocation>
        <location evidence="1">Virion</location>
    </subcellularLocation>
</comment>
<comment type="similarity">
    <text evidence="1">Belongs to the morbillivirus/respirovirus/rubulavirus M protein family.</text>
</comment>
<gene>
    <name type="primary">M</name>
</gene>